<gene>
    <name evidence="1" type="primary">nusA</name>
    <name type="ordered locus">Ta0393</name>
</gene>
<keyword id="KW-0963">Cytoplasm</keyword>
<keyword id="KW-1185">Reference proteome</keyword>
<keyword id="KW-0694">RNA-binding</keyword>
<keyword id="KW-0804">Transcription</keyword>
<keyword id="KW-0805">Transcription regulation</keyword>
<keyword id="KW-0806">Transcription termination</keyword>
<organism>
    <name type="scientific">Thermoplasma acidophilum (strain ATCC 25905 / DSM 1728 / JCM 9062 / NBRC 15155 / AMRC-C165)</name>
    <dbReference type="NCBI Taxonomy" id="273075"/>
    <lineage>
        <taxon>Archaea</taxon>
        <taxon>Methanobacteriati</taxon>
        <taxon>Thermoplasmatota</taxon>
        <taxon>Thermoplasmata</taxon>
        <taxon>Thermoplasmatales</taxon>
        <taxon>Thermoplasmataceae</taxon>
        <taxon>Thermoplasma</taxon>
    </lineage>
</organism>
<name>NUSA_THEAC</name>
<comment type="function">
    <text evidence="1">Participates in transcription termination.</text>
</comment>
<comment type="subcellular location">
    <subcellularLocation>
        <location evidence="1">Cytoplasm</location>
    </subcellularLocation>
</comment>
<comment type="similarity">
    <text evidence="1">Belongs to the NusA family.</text>
</comment>
<comment type="sequence caution" evidence="2">
    <conflict type="erroneous initiation">
        <sequence resource="EMBL-CDS" id="CAC11537"/>
    </conflict>
</comment>
<proteinExistence type="inferred from homology"/>
<evidence type="ECO:0000255" key="1">
    <source>
        <dbReference type="HAMAP-Rule" id="MF_00945"/>
    </source>
</evidence>
<evidence type="ECO:0000305" key="2"/>
<accession>Q03589</accession>
<feature type="chain" id="PRO_0000181986" description="Probable transcription termination protein NusA">
    <location>
        <begin position="1"/>
        <end position="144"/>
    </location>
</feature>
<feature type="domain" description="KH" evidence="1">
    <location>
        <begin position="101"/>
        <end position="144"/>
    </location>
</feature>
<protein>
    <recommendedName>
        <fullName evidence="1">Probable transcription termination protein NusA</fullName>
    </recommendedName>
</protein>
<sequence length="144" mass="16776">MEMNEITVDNETMAHIAIFEKIARIELMECVENEDMILFVVGEHKMAEMFRKNKEVISQLKEKINKHILVAEVSRDLLTFVRNIFFRYGVNEIQISWKNNRTDIVVGVKPEEIGKVIGKEGKNIKLFKDAVSRYFNVNSISVKQ</sequence>
<reference key="1">
    <citation type="journal article" date="1992" name="Nucleic Acids Res.">
        <title>Nucleotide sequence of the genes encoding the subunits H, B, A' and A'' of the DNA-dependent RNA polymerase and the initiator tRNA from Thermoplasma acidophilum.</title>
        <authorList>
            <person name="Klenk H.-P."/>
            <person name="Renner O."/>
            <person name="Schwass V."/>
            <person name="Zillig W."/>
        </authorList>
    </citation>
    <scope>NUCLEOTIDE SEQUENCE [GENOMIC DNA]</scope>
    <source>
        <strain>ATCC 25905 / DSM 1728 / JCM 9062 / NBRC 15155 / AMRC-C165</strain>
    </source>
</reference>
<reference key="2">
    <citation type="journal article" date="2000" name="Nature">
        <title>The genome sequence of the thermoacidophilic scavenger Thermoplasma acidophilum.</title>
        <authorList>
            <person name="Ruepp A."/>
            <person name="Graml W."/>
            <person name="Santos-Martinez M.-L."/>
            <person name="Koretke K.K."/>
            <person name="Volker C."/>
            <person name="Mewes H.-W."/>
            <person name="Frishman D."/>
            <person name="Stocker S."/>
            <person name="Lupas A.N."/>
            <person name="Baumeister W."/>
        </authorList>
    </citation>
    <scope>NUCLEOTIDE SEQUENCE [LARGE SCALE GENOMIC DNA]</scope>
    <source>
        <strain>ATCC 25905 / DSM 1728 / JCM 9062 / NBRC 15155 / AMRC-C165</strain>
    </source>
</reference>
<dbReference type="EMBL" id="X68198">
    <property type="protein sequence ID" value="CAA48283.1"/>
    <property type="molecule type" value="Genomic_DNA"/>
</dbReference>
<dbReference type="EMBL" id="AL445064">
    <property type="protein sequence ID" value="CAC11537.1"/>
    <property type="status" value="ALT_INIT"/>
    <property type="molecule type" value="Genomic_DNA"/>
</dbReference>
<dbReference type="PIR" id="S26725">
    <property type="entry name" value="S26725"/>
</dbReference>
<dbReference type="SMR" id="Q03589"/>
<dbReference type="STRING" id="273075.gene:9571613"/>
<dbReference type="PaxDb" id="273075-Ta0393m"/>
<dbReference type="EnsemblBacteria" id="CAC11537">
    <property type="protein sequence ID" value="CAC11537"/>
    <property type="gene ID" value="CAC11537"/>
</dbReference>
<dbReference type="KEGG" id="tac:Ta0393"/>
<dbReference type="eggNOG" id="arCOG01760">
    <property type="taxonomic scope" value="Archaea"/>
</dbReference>
<dbReference type="HOGENOM" id="CLU_131906_1_0_2"/>
<dbReference type="InParanoid" id="Q03589"/>
<dbReference type="Proteomes" id="UP000001024">
    <property type="component" value="Chromosome"/>
</dbReference>
<dbReference type="GO" id="GO:0005737">
    <property type="term" value="C:cytoplasm"/>
    <property type="evidence" value="ECO:0007669"/>
    <property type="project" value="UniProtKB-SubCell"/>
</dbReference>
<dbReference type="GO" id="GO:0003723">
    <property type="term" value="F:RNA binding"/>
    <property type="evidence" value="ECO:0007669"/>
    <property type="project" value="UniProtKB-KW"/>
</dbReference>
<dbReference type="GO" id="GO:0006353">
    <property type="term" value="P:DNA-templated transcription termination"/>
    <property type="evidence" value="ECO:0007669"/>
    <property type="project" value="UniProtKB-UniRule"/>
</dbReference>
<dbReference type="CDD" id="cd22531">
    <property type="entry name" value="KH-II_NusA_arch_rpt2"/>
    <property type="match status" value="1"/>
</dbReference>
<dbReference type="Gene3D" id="3.30.300.20">
    <property type="match status" value="2"/>
</dbReference>
<dbReference type="HAMAP" id="MF_00945_A">
    <property type="entry name" value="NusA_A"/>
    <property type="match status" value="1"/>
</dbReference>
<dbReference type="InterPro" id="IPR015946">
    <property type="entry name" value="KH_dom-like_a/b"/>
</dbReference>
<dbReference type="InterPro" id="IPR025249">
    <property type="entry name" value="KH_dom_NusA-like"/>
</dbReference>
<dbReference type="InterPro" id="IPR009019">
    <property type="entry name" value="KH_sf_prok-type"/>
</dbReference>
<dbReference type="InterPro" id="IPR010212">
    <property type="entry name" value="NusA_arc"/>
</dbReference>
<dbReference type="NCBIfam" id="TIGR01952">
    <property type="entry name" value="nusA_arch"/>
    <property type="match status" value="1"/>
</dbReference>
<dbReference type="NCBIfam" id="NF006258">
    <property type="entry name" value="PRK08406.1-2"/>
    <property type="match status" value="1"/>
</dbReference>
<dbReference type="Pfam" id="PF13184">
    <property type="entry name" value="KH_5"/>
    <property type="match status" value="1"/>
</dbReference>
<dbReference type="SUPFAM" id="SSF54814">
    <property type="entry name" value="Prokaryotic type KH domain (KH-domain type II)"/>
    <property type="match status" value="1"/>
</dbReference>
<dbReference type="PROSITE" id="PS50084">
    <property type="entry name" value="KH_TYPE_1"/>
    <property type="match status" value="1"/>
</dbReference>